<keyword id="KW-0963">Cytoplasm</keyword>
<keyword id="KW-0690">Ribosome biogenesis</keyword>
<organism>
    <name type="scientific">Bordetella parapertussis (strain 12822 / ATCC BAA-587 / NCTC 13253)</name>
    <dbReference type="NCBI Taxonomy" id="257311"/>
    <lineage>
        <taxon>Bacteria</taxon>
        <taxon>Pseudomonadati</taxon>
        <taxon>Pseudomonadota</taxon>
        <taxon>Betaproteobacteria</taxon>
        <taxon>Burkholderiales</taxon>
        <taxon>Alcaligenaceae</taxon>
        <taxon>Bordetella</taxon>
    </lineage>
</organism>
<sequence>MRRHKSKSIPGRNLRLADQIQKDLAGIIQREIDMTRAGLITLSGVELSADYAHAKVYFTVLGAEPDTAAALLNEKAGWLHSQLYKLLHIHTVPTLRFVHDLQITRGIEMSVLIDRANRPGPHSGVPDEPEDQS</sequence>
<evidence type="ECO:0000255" key="1">
    <source>
        <dbReference type="HAMAP-Rule" id="MF_00003"/>
    </source>
</evidence>
<gene>
    <name evidence="1" type="primary">rbfA</name>
    <name type="ordered locus">BPP1863</name>
</gene>
<accession>Q7W9A4</accession>
<protein>
    <recommendedName>
        <fullName evidence="1">Ribosome-binding factor A</fullName>
    </recommendedName>
</protein>
<proteinExistence type="inferred from homology"/>
<comment type="function">
    <text evidence="1">One of several proteins that assist in the late maturation steps of the functional core of the 30S ribosomal subunit. Associates with free 30S ribosomal subunits (but not with 30S subunits that are part of 70S ribosomes or polysomes). Required for efficient processing of 16S rRNA. May interact with the 5'-terminal helix region of 16S rRNA.</text>
</comment>
<comment type="subunit">
    <text evidence="1">Monomer. Binds 30S ribosomal subunits, but not 50S ribosomal subunits or 70S ribosomes.</text>
</comment>
<comment type="subcellular location">
    <subcellularLocation>
        <location evidence="1">Cytoplasm</location>
    </subcellularLocation>
</comment>
<comment type="similarity">
    <text evidence="1">Belongs to the RbfA family.</text>
</comment>
<reference key="1">
    <citation type="journal article" date="2003" name="Nat. Genet.">
        <title>Comparative analysis of the genome sequences of Bordetella pertussis, Bordetella parapertussis and Bordetella bronchiseptica.</title>
        <authorList>
            <person name="Parkhill J."/>
            <person name="Sebaihia M."/>
            <person name="Preston A."/>
            <person name="Murphy L.D."/>
            <person name="Thomson N.R."/>
            <person name="Harris D.E."/>
            <person name="Holden M.T.G."/>
            <person name="Churcher C.M."/>
            <person name="Bentley S.D."/>
            <person name="Mungall K.L."/>
            <person name="Cerdeno-Tarraga A.-M."/>
            <person name="Temple L."/>
            <person name="James K.D."/>
            <person name="Harris B."/>
            <person name="Quail M.A."/>
            <person name="Achtman M."/>
            <person name="Atkin R."/>
            <person name="Baker S."/>
            <person name="Basham D."/>
            <person name="Bason N."/>
            <person name="Cherevach I."/>
            <person name="Chillingworth T."/>
            <person name="Collins M."/>
            <person name="Cronin A."/>
            <person name="Davis P."/>
            <person name="Doggett J."/>
            <person name="Feltwell T."/>
            <person name="Goble A."/>
            <person name="Hamlin N."/>
            <person name="Hauser H."/>
            <person name="Holroyd S."/>
            <person name="Jagels K."/>
            <person name="Leather S."/>
            <person name="Moule S."/>
            <person name="Norberczak H."/>
            <person name="O'Neil S."/>
            <person name="Ormond D."/>
            <person name="Price C."/>
            <person name="Rabbinowitsch E."/>
            <person name="Rutter S."/>
            <person name="Sanders M."/>
            <person name="Saunders D."/>
            <person name="Seeger K."/>
            <person name="Sharp S."/>
            <person name="Simmonds M."/>
            <person name="Skelton J."/>
            <person name="Squares R."/>
            <person name="Squares S."/>
            <person name="Stevens K."/>
            <person name="Unwin L."/>
            <person name="Whitehead S."/>
            <person name="Barrell B.G."/>
            <person name="Maskell D.J."/>
        </authorList>
    </citation>
    <scope>NUCLEOTIDE SEQUENCE [LARGE SCALE GENOMIC DNA]</scope>
    <source>
        <strain>12822 / ATCC BAA-587 / NCTC 13253</strain>
    </source>
</reference>
<dbReference type="EMBL" id="BX640428">
    <property type="protein sequence ID" value="CAE37164.1"/>
    <property type="molecule type" value="Genomic_DNA"/>
</dbReference>
<dbReference type="RefSeq" id="WP_010928246.1">
    <property type="nucleotide sequence ID" value="NC_002928.3"/>
</dbReference>
<dbReference type="SMR" id="Q7W9A4"/>
<dbReference type="GeneID" id="93203632"/>
<dbReference type="KEGG" id="bpa:BPP1863"/>
<dbReference type="HOGENOM" id="CLU_089475_5_1_4"/>
<dbReference type="Proteomes" id="UP000001421">
    <property type="component" value="Chromosome"/>
</dbReference>
<dbReference type="GO" id="GO:0005829">
    <property type="term" value="C:cytosol"/>
    <property type="evidence" value="ECO:0007669"/>
    <property type="project" value="TreeGrafter"/>
</dbReference>
<dbReference type="GO" id="GO:0043024">
    <property type="term" value="F:ribosomal small subunit binding"/>
    <property type="evidence" value="ECO:0007669"/>
    <property type="project" value="TreeGrafter"/>
</dbReference>
<dbReference type="GO" id="GO:0030490">
    <property type="term" value="P:maturation of SSU-rRNA"/>
    <property type="evidence" value="ECO:0007669"/>
    <property type="project" value="UniProtKB-UniRule"/>
</dbReference>
<dbReference type="Gene3D" id="3.30.300.20">
    <property type="match status" value="1"/>
</dbReference>
<dbReference type="HAMAP" id="MF_00003">
    <property type="entry name" value="RbfA"/>
    <property type="match status" value="1"/>
</dbReference>
<dbReference type="InterPro" id="IPR015946">
    <property type="entry name" value="KH_dom-like_a/b"/>
</dbReference>
<dbReference type="InterPro" id="IPR000238">
    <property type="entry name" value="RbfA"/>
</dbReference>
<dbReference type="InterPro" id="IPR023799">
    <property type="entry name" value="RbfA_dom_sf"/>
</dbReference>
<dbReference type="NCBIfam" id="TIGR00082">
    <property type="entry name" value="rbfA"/>
    <property type="match status" value="1"/>
</dbReference>
<dbReference type="PANTHER" id="PTHR33515">
    <property type="entry name" value="RIBOSOME-BINDING FACTOR A, CHLOROPLASTIC-RELATED"/>
    <property type="match status" value="1"/>
</dbReference>
<dbReference type="PANTHER" id="PTHR33515:SF1">
    <property type="entry name" value="RIBOSOME-BINDING FACTOR A, CHLOROPLASTIC-RELATED"/>
    <property type="match status" value="1"/>
</dbReference>
<dbReference type="Pfam" id="PF02033">
    <property type="entry name" value="RBFA"/>
    <property type="match status" value="1"/>
</dbReference>
<dbReference type="SUPFAM" id="SSF89919">
    <property type="entry name" value="Ribosome-binding factor A, RbfA"/>
    <property type="match status" value="1"/>
</dbReference>
<name>RBFA_BORPA</name>
<feature type="chain" id="PRO_0000102629" description="Ribosome-binding factor A">
    <location>
        <begin position="1"/>
        <end position="133"/>
    </location>
</feature>